<comment type="function">
    <text evidence="1">This protein is one of the two subunits of integration host factor, a specific DNA-binding protein that functions in genetic recombination as well as in transcriptional and translational control.</text>
</comment>
<comment type="subunit">
    <text evidence="1">Heterodimer of an alpha and a beta chain.</text>
</comment>
<comment type="similarity">
    <text evidence="1">Belongs to the bacterial histone-like protein family.</text>
</comment>
<organism>
    <name type="scientific">Xylella fastidiosa (strain Temecula1 / ATCC 700964)</name>
    <dbReference type="NCBI Taxonomy" id="183190"/>
    <lineage>
        <taxon>Bacteria</taxon>
        <taxon>Pseudomonadati</taxon>
        <taxon>Pseudomonadota</taxon>
        <taxon>Gammaproteobacteria</taxon>
        <taxon>Lysobacterales</taxon>
        <taxon>Lysobacteraceae</taxon>
        <taxon>Xylella</taxon>
    </lineage>
</organism>
<protein>
    <recommendedName>
        <fullName evidence="1">Integration host factor subunit beta</fullName>
        <shortName evidence="1">IHF-beta</shortName>
    </recommendedName>
</protein>
<gene>
    <name evidence="1" type="primary">ihfB</name>
    <name evidence="1" type="synonym">himD</name>
    <name type="ordered locus">PD_1455</name>
</gene>
<sequence>MTKSELIEILTKRQAHLKSDDVDLAVKSLLEMMGGALSGGDRIEIRGFGSFSLHYRPPRCGRNPKTGESVALPGKYVPHFKPGKELRERVASVVPLGECGDITE</sequence>
<name>IHFB_XYLFT</name>
<evidence type="ECO:0000255" key="1">
    <source>
        <dbReference type="HAMAP-Rule" id="MF_00381"/>
    </source>
</evidence>
<keyword id="KW-0233">DNA recombination</keyword>
<keyword id="KW-0238">DNA-binding</keyword>
<keyword id="KW-1185">Reference proteome</keyword>
<keyword id="KW-0804">Transcription</keyword>
<keyword id="KW-0805">Transcription regulation</keyword>
<keyword id="KW-0810">Translation regulation</keyword>
<accession>Q87BJ8</accession>
<dbReference type="EMBL" id="AE009442">
    <property type="protein sequence ID" value="AAO29299.1"/>
    <property type="molecule type" value="Genomic_DNA"/>
</dbReference>
<dbReference type="RefSeq" id="WP_004088432.1">
    <property type="nucleotide sequence ID" value="NC_004556.1"/>
</dbReference>
<dbReference type="SMR" id="Q87BJ8"/>
<dbReference type="KEGG" id="xft:PD_1455"/>
<dbReference type="HOGENOM" id="CLU_105066_2_0_6"/>
<dbReference type="Proteomes" id="UP000002516">
    <property type="component" value="Chromosome"/>
</dbReference>
<dbReference type="GO" id="GO:0005694">
    <property type="term" value="C:chromosome"/>
    <property type="evidence" value="ECO:0007669"/>
    <property type="project" value="InterPro"/>
</dbReference>
<dbReference type="GO" id="GO:0005829">
    <property type="term" value="C:cytosol"/>
    <property type="evidence" value="ECO:0007669"/>
    <property type="project" value="TreeGrafter"/>
</dbReference>
<dbReference type="GO" id="GO:0003677">
    <property type="term" value="F:DNA binding"/>
    <property type="evidence" value="ECO:0007669"/>
    <property type="project" value="UniProtKB-UniRule"/>
</dbReference>
<dbReference type="GO" id="GO:0030527">
    <property type="term" value="F:structural constituent of chromatin"/>
    <property type="evidence" value="ECO:0007669"/>
    <property type="project" value="InterPro"/>
</dbReference>
<dbReference type="GO" id="GO:0006310">
    <property type="term" value="P:DNA recombination"/>
    <property type="evidence" value="ECO:0007669"/>
    <property type="project" value="UniProtKB-UniRule"/>
</dbReference>
<dbReference type="GO" id="GO:0006355">
    <property type="term" value="P:regulation of DNA-templated transcription"/>
    <property type="evidence" value="ECO:0007669"/>
    <property type="project" value="UniProtKB-UniRule"/>
</dbReference>
<dbReference type="GO" id="GO:0006417">
    <property type="term" value="P:regulation of translation"/>
    <property type="evidence" value="ECO:0007669"/>
    <property type="project" value="UniProtKB-UniRule"/>
</dbReference>
<dbReference type="CDD" id="cd13836">
    <property type="entry name" value="IHF_B"/>
    <property type="match status" value="1"/>
</dbReference>
<dbReference type="FunFam" id="4.10.520.10:FF:000003">
    <property type="entry name" value="Integration host factor subunit beta"/>
    <property type="match status" value="1"/>
</dbReference>
<dbReference type="Gene3D" id="4.10.520.10">
    <property type="entry name" value="IHF-like DNA-binding proteins"/>
    <property type="match status" value="1"/>
</dbReference>
<dbReference type="HAMAP" id="MF_00381">
    <property type="entry name" value="IHF_beta"/>
    <property type="match status" value="1"/>
</dbReference>
<dbReference type="InterPro" id="IPR000119">
    <property type="entry name" value="Hist_DNA-bd"/>
</dbReference>
<dbReference type="InterPro" id="IPR020816">
    <property type="entry name" value="Histone-like_DNA-bd_CS"/>
</dbReference>
<dbReference type="InterPro" id="IPR010992">
    <property type="entry name" value="IHF-like_DNA-bd_dom_sf"/>
</dbReference>
<dbReference type="InterPro" id="IPR005685">
    <property type="entry name" value="IHF_beta"/>
</dbReference>
<dbReference type="NCBIfam" id="TIGR00988">
    <property type="entry name" value="hip"/>
    <property type="match status" value="1"/>
</dbReference>
<dbReference type="NCBIfam" id="NF001222">
    <property type="entry name" value="PRK00199.1"/>
    <property type="match status" value="1"/>
</dbReference>
<dbReference type="PANTHER" id="PTHR33175">
    <property type="entry name" value="DNA-BINDING PROTEIN HU"/>
    <property type="match status" value="1"/>
</dbReference>
<dbReference type="PANTHER" id="PTHR33175:SF5">
    <property type="entry name" value="INTEGRATION HOST FACTOR SUBUNIT BETA"/>
    <property type="match status" value="1"/>
</dbReference>
<dbReference type="Pfam" id="PF00216">
    <property type="entry name" value="Bac_DNA_binding"/>
    <property type="match status" value="1"/>
</dbReference>
<dbReference type="PRINTS" id="PR01727">
    <property type="entry name" value="DNABINDINGHU"/>
</dbReference>
<dbReference type="SMART" id="SM00411">
    <property type="entry name" value="BHL"/>
    <property type="match status" value="1"/>
</dbReference>
<dbReference type="SUPFAM" id="SSF47729">
    <property type="entry name" value="IHF-like DNA-binding proteins"/>
    <property type="match status" value="1"/>
</dbReference>
<dbReference type="PROSITE" id="PS00045">
    <property type="entry name" value="HISTONE_LIKE"/>
    <property type="match status" value="1"/>
</dbReference>
<feature type="chain" id="PRO_0000105080" description="Integration host factor subunit beta">
    <location>
        <begin position="1"/>
        <end position="104"/>
    </location>
</feature>
<proteinExistence type="inferred from homology"/>
<reference key="1">
    <citation type="journal article" date="2003" name="J. Bacteriol.">
        <title>Comparative analyses of the complete genome sequences of Pierce's disease and citrus variegated chlorosis strains of Xylella fastidiosa.</title>
        <authorList>
            <person name="Van Sluys M.A."/>
            <person name="de Oliveira M.C."/>
            <person name="Monteiro-Vitorello C.B."/>
            <person name="Miyaki C.Y."/>
            <person name="Furlan L.R."/>
            <person name="Camargo L.E.A."/>
            <person name="da Silva A.C.R."/>
            <person name="Moon D.H."/>
            <person name="Takita M.A."/>
            <person name="Lemos E.G.M."/>
            <person name="Machado M.A."/>
            <person name="Ferro M.I.T."/>
            <person name="da Silva F.R."/>
            <person name="Goldman M.H.S."/>
            <person name="Goldman G.H."/>
            <person name="Lemos M.V.F."/>
            <person name="El-Dorry H."/>
            <person name="Tsai S.M."/>
            <person name="Carrer H."/>
            <person name="Carraro D.M."/>
            <person name="de Oliveira R.C."/>
            <person name="Nunes L.R."/>
            <person name="Siqueira W.J."/>
            <person name="Coutinho L.L."/>
            <person name="Kimura E.T."/>
            <person name="Ferro E.S."/>
            <person name="Harakava R."/>
            <person name="Kuramae E.E."/>
            <person name="Marino C.L."/>
            <person name="Giglioti E."/>
            <person name="Abreu I.L."/>
            <person name="Alves L.M.C."/>
            <person name="do Amaral A.M."/>
            <person name="Baia G.S."/>
            <person name="Blanco S.R."/>
            <person name="Brito M.S."/>
            <person name="Cannavan F.S."/>
            <person name="Celestino A.V."/>
            <person name="da Cunha A.F."/>
            <person name="Fenille R.C."/>
            <person name="Ferro J.A."/>
            <person name="Formighieri E.F."/>
            <person name="Kishi L.T."/>
            <person name="Leoni S.G."/>
            <person name="Oliveira A.R."/>
            <person name="Rosa V.E. Jr."/>
            <person name="Sassaki F.T."/>
            <person name="Sena J.A.D."/>
            <person name="de Souza A.A."/>
            <person name="Truffi D."/>
            <person name="Tsukumo F."/>
            <person name="Yanai G.M."/>
            <person name="Zaros L.G."/>
            <person name="Civerolo E.L."/>
            <person name="Simpson A.J.G."/>
            <person name="Almeida N.F. Jr."/>
            <person name="Setubal J.C."/>
            <person name="Kitajima J.P."/>
        </authorList>
    </citation>
    <scope>NUCLEOTIDE SEQUENCE [LARGE SCALE GENOMIC DNA]</scope>
    <source>
        <strain>Temecula1 / ATCC 700964</strain>
    </source>
</reference>